<sequence length="68" mass="7630">MPKLKTKSSAKKRFKISATGKVMMAQAGKRHGMIKRTNSQIRKLRGTTAMSKQDGKIVKSYMPYSLRG</sequence>
<reference key="1">
    <citation type="journal article" date="2005" name="Science">
        <title>Genome streamlining in a cosmopolitan oceanic bacterium.</title>
        <authorList>
            <person name="Giovannoni S.J."/>
            <person name="Tripp H.J."/>
            <person name="Givan S."/>
            <person name="Podar M."/>
            <person name="Vergin K.L."/>
            <person name="Baptista D."/>
            <person name="Bibbs L."/>
            <person name="Eads J."/>
            <person name="Richardson T.H."/>
            <person name="Noordewier M."/>
            <person name="Rappe M.S."/>
            <person name="Short J.M."/>
            <person name="Carrington J.C."/>
            <person name="Mathur E.J."/>
        </authorList>
    </citation>
    <scope>NUCLEOTIDE SEQUENCE [LARGE SCALE GENOMIC DNA]</scope>
    <source>
        <strain>HTCC1062</strain>
    </source>
</reference>
<accession>Q4FNH7</accession>
<keyword id="KW-1185">Reference proteome</keyword>
<keyword id="KW-0687">Ribonucleoprotein</keyword>
<keyword id="KW-0689">Ribosomal protein</keyword>
<evidence type="ECO:0000255" key="1">
    <source>
        <dbReference type="HAMAP-Rule" id="MF_00514"/>
    </source>
</evidence>
<evidence type="ECO:0000305" key="2"/>
<feature type="chain" id="PRO_0000258719" description="Large ribosomal subunit protein bL35">
    <location>
        <begin position="1"/>
        <end position="68"/>
    </location>
</feature>
<protein>
    <recommendedName>
        <fullName evidence="1">Large ribosomal subunit protein bL35</fullName>
    </recommendedName>
    <alternativeName>
        <fullName evidence="2">50S ribosomal protein L35</fullName>
    </alternativeName>
</protein>
<comment type="similarity">
    <text evidence="1">Belongs to the bacterial ribosomal protein bL35 family.</text>
</comment>
<proteinExistence type="inferred from homology"/>
<dbReference type="EMBL" id="CP000084">
    <property type="protein sequence ID" value="AAZ21262.1"/>
    <property type="molecule type" value="Genomic_DNA"/>
</dbReference>
<dbReference type="RefSeq" id="WP_006997462.1">
    <property type="nucleotide sequence ID" value="NC_007205.1"/>
</dbReference>
<dbReference type="SMR" id="Q4FNH7"/>
<dbReference type="STRING" id="335992.SAR11_0440"/>
<dbReference type="GeneID" id="66294939"/>
<dbReference type="KEGG" id="pub:SAR11_0440"/>
<dbReference type="eggNOG" id="COG0291">
    <property type="taxonomic scope" value="Bacteria"/>
</dbReference>
<dbReference type="HOGENOM" id="CLU_169643_2_1_5"/>
<dbReference type="OrthoDB" id="9804851at2"/>
<dbReference type="Proteomes" id="UP000002528">
    <property type="component" value="Chromosome"/>
</dbReference>
<dbReference type="GO" id="GO:0022625">
    <property type="term" value="C:cytosolic large ribosomal subunit"/>
    <property type="evidence" value="ECO:0007669"/>
    <property type="project" value="TreeGrafter"/>
</dbReference>
<dbReference type="GO" id="GO:0003735">
    <property type="term" value="F:structural constituent of ribosome"/>
    <property type="evidence" value="ECO:0007669"/>
    <property type="project" value="InterPro"/>
</dbReference>
<dbReference type="GO" id="GO:0006412">
    <property type="term" value="P:translation"/>
    <property type="evidence" value="ECO:0007669"/>
    <property type="project" value="UniProtKB-UniRule"/>
</dbReference>
<dbReference type="FunFam" id="4.10.410.60:FF:000001">
    <property type="entry name" value="50S ribosomal protein L35"/>
    <property type="match status" value="1"/>
</dbReference>
<dbReference type="Gene3D" id="4.10.410.60">
    <property type="match status" value="1"/>
</dbReference>
<dbReference type="HAMAP" id="MF_00514">
    <property type="entry name" value="Ribosomal_bL35"/>
    <property type="match status" value="1"/>
</dbReference>
<dbReference type="InterPro" id="IPR001706">
    <property type="entry name" value="Ribosomal_bL35"/>
</dbReference>
<dbReference type="InterPro" id="IPR021137">
    <property type="entry name" value="Ribosomal_bL35-like"/>
</dbReference>
<dbReference type="InterPro" id="IPR018265">
    <property type="entry name" value="Ribosomal_bL35_CS"/>
</dbReference>
<dbReference type="InterPro" id="IPR037229">
    <property type="entry name" value="Ribosomal_bL35_sf"/>
</dbReference>
<dbReference type="NCBIfam" id="TIGR00001">
    <property type="entry name" value="rpmI_bact"/>
    <property type="match status" value="1"/>
</dbReference>
<dbReference type="PANTHER" id="PTHR33343">
    <property type="entry name" value="54S RIBOSOMAL PROTEIN BL35M"/>
    <property type="match status" value="1"/>
</dbReference>
<dbReference type="PANTHER" id="PTHR33343:SF1">
    <property type="entry name" value="LARGE RIBOSOMAL SUBUNIT PROTEIN BL35M"/>
    <property type="match status" value="1"/>
</dbReference>
<dbReference type="Pfam" id="PF01632">
    <property type="entry name" value="Ribosomal_L35p"/>
    <property type="match status" value="1"/>
</dbReference>
<dbReference type="PRINTS" id="PR00064">
    <property type="entry name" value="RIBOSOMALL35"/>
</dbReference>
<dbReference type="SUPFAM" id="SSF143034">
    <property type="entry name" value="L35p-like"/>
    <property type="match status" value="1"/>
</dbReference>
<dbReference type="PROSITE" id="PS00936">
    <property type="entry name" value="RIBOSOMAL_L35"/>
    <property type="match status" value="1"/>
</dbReference>
<name>RL35_PELUB</name>
<organism>
    <name type="scientific">Pelagibacter ubique (strain HTCC1062)</name>
    <dbReference type="NCBI Taxonomy" id="335992"/>
    <lineage>
        <taxon>Bacteria</taxon>
        <taxon>Pseudomonadati</taxon>
        <taxon>Pseudomonadota</taxon>
        <taxon>Alphaproteobacteria</taxon>
        <taxon>Candidatus Pelagibacterales</taxon>
        <taxon>Candidatus Pelagibacteraceae</taxon>
        <taxon>Candidatus Pelagibacter</taxon>
    </lineage>
</organism>
<gene>
    <name evidence="1" type="primary">rpmI</name>
    <name type="ordered locus">SAR11_0440</name>
</gene>